<protein>
    <recommendedName>
        <fullName evidence="8">Chromatin assembly factor 1 subunit B</fullName>
        <shortName>CAF-1 subunit B</shortName>
    </recommendedName>
    <alternativeName>
        <fullName>Chromatin assembly factor I p60 subunit</fullName>
        <shortName>CAF-I 60 kDa subunit</shortName>
        <shortName>CAF-I p60</shortName>
    </alternativeName>
    <alternativeName>
        <fullName>M-phase phosphoprotein 7</fullName>
    </alternativeName>
</protein>
<feature type="chain" id="PRO_0000050896" description="Chromatin assembly factor 1 subunit B">
    <location>
        <begin position="1"/>
        <end position="559"/>
    </location>
</feature>
<feature type="repeat" description="WD 1">
    <location>
        <begin position="11"/>
        <end position="54"/>
    </location>
</feature>
<feature type="repeat" description="WD 2">
    <location>
        <begin position="64"/>
        <end position="103"/>
    </location>
</feature>
<feature type="repeat" description="WD 3">
    <location>
        <begin position="127"/>
        <end position="166"/>
    </location>
</feature>
<feature type="repeat" description="WD 4">
    <location>
        <begin position="169"/>
        <end position="208"/>
    </location>
</feature>
<feature type="repeat" description="WD 5">
    <location>
        <begin position="228"/>
        <end position="279"/>
    </location>
</feature>
<feature type="repeat" description="WD 6">
    <location>
        <begin position="299"/>
        <end position="340"/>
    </location>
</feature>
<feature type="repeat" description="WD 7">
    <location>
        <begin position="344"/>
        <end position="385"/>
    </location>
</feature>
<feature type="region of interest" description="Disordered" evidence="3">
    <location>
        <begin position="386"/>
        <end position="559"/>
    </location>
</feature>
<feature type="compositionally biased region" description="Low complexity" evidence="3">
    <location>
        <begin position="430"/>
        <end position="444"/>
    </location>
</feature>
<feature type="compositionally biased region" description="Polar residues" evidence="3">
    <location>
        <begin position="469"/>
        <end position="495"/>
    </location>
</feature>
<feature type="compositionally biased region" description="Low complexity" evidence="3">
    <location>
        <begin position="509"/>
        <end position="526"/>
    </location>
</feature>
<feature type="compositionally biased region" description="Basic and acidic residues" evidence="3">
    <location>
        <begin position="541"/>
        <end position="552"/>
    </location>
</feature>
<feature type="modified residue" description="Phosphothreonine" evidence="15">
    <location>
        <position position="394"/>
    </location>
</feature>
<feature type="modified residue" description="Phosphoserine" evidence="13">
    <location>
        <position position="409"/>
    </location>
</feature>
<feature type="modified residue" description="Phosphothreonine" evidence="10 15">
    <location>
        <position position="419"/>
    </location>
</feature>
<feature type="modified residue" description="Phosphoserine" evidence="10 12 15">
    <location>
        <position position="429"/>
    </location>
</feature>
<feature type="modified residue" description="Phosphothreonine" evidence="10 15">
    <location>
        <position position="433"/>
    </location>
</feature>
<feature type="modified residue" description="Phosphoserine" evidence="13 14 15">
    <location>
        <position position="458"/>
    </location>
</feature>
<feature type="modified residue" description="N6-acetyllysine" evidence="11">
    <location>
        <position position="494"/>
    </location>
</feature>
<feature type="modified residue" description="Phosphothreonine" evidence="2">
    <location>
        <position position="495"/>
    </location>
</feature>
<feature type="modified residue" description="Phosphothreonine" evidence="2">
    <location>
        <position position="509"/>
    </location>
</feature>
<feature type="modified residue" description="Phosphothreonine" evidence="2">
    <location>
        <position position="521"/>
    </location>
</feature>
<feature type="modified residue" description="Phosphothreonine" evidence="2">
    <location>
        <position position="531"/>
    </location>
</feature>
<feature type="modified residue" description="Phosphoserine" evidence="10">
    <location>
        <position position="538"/>
    </location>
</feature>
<feature type="sequence variant" id="VAR_053387" description="In dbSNP:rs74900401.">
    <original>K</original>
    <variation>Q</variation>
    <location>
        <position position="506"/>
    </location>
</feature>
<feature type="sequence conflict" description="In Ref. 5; CAA66915." evidence="8" ref="5">
    <original>K</original>
    <variation>N</variation>
    <location>
        <position position="494"/>
    </location>
</feature>
<feature type="strand" evidence="17">
    <location>
        <begin position="2"/>
        <end position="5"/>
    </location>
</feature>
<feature type="turn" evidence="17">
    <location>
        <begin position="10"/>
        <end position="13"/>
    </location>
</feature>
<feature type="strand" evidence="17">
    <location>
        <begin position="16"/>
        <end position="21"/>
    </location>
</feature>
<feature type="strand" evidence="17">
    <location>
        <begin position="27"/>
        <end position="36"/>
    </location>
</feature>
<feature type="strand" evidence="17">
    <location>
        <begin position="41"/>
        <end position="48"/>
    </location>
</feature>
<feature type="strand" evidence="17">
    <location>
        <begin position="50"/>
        <end position="52"/>
    </location>
</feature>
<feature type="strand" evidence="17">
    <location>
        <begin position="54"/>
        <end position="62"/>
    </location>
</feature>
<feature type="strand" evidence="17">
    <location>
        <begin position="69"/>
        <end position="74"/>
    </location>
</feature>
<feature type="strand" evidence="18">
    <location>
        <begin position="76"/>
        <end position="80"/>
    </location>
</feature>
<feature type="strand" evidence="17">
    <location>
        <begin position="81"/>
        <end position="85"/>
    </location>
</feature>
<feature type="strand" evidence="17">
    <location>
        <begin position="90"/>
        <end position="95"/>
    </location>
</feature>
<feature type="strand" evidence="17">
    <location>
        <begin position="119"/>
        <end position="125"/>
    </location>
</feature>
<feature type="strand" evidence="17">
    <location>
        <begin position="132"/>
        <end position="137"/>
    </location>
</feature>
<feature type="strand" evidence="17">
    <location>
        <begin position="141"/>
        <end position="148"/>
    </location>
</feature>
<feature type="strand" evidence="17">
    <location>
        <begin position="153"/>
        <end position="157"/>
    </location>
</feature>
<feature type="turn" evidence="17">
    <location>
        <begin position="158"/>
        <end position="161"/>
    </location>
</feature>
<feature type="strand" evidence="17">
    <location>
        <begin position="162"/>
        <end position="167"/>
    </location>
</feature>
<feature type="strand" evidence="17">
    <location>
        <begin position="174"/>
        <end position="179"/>
    </location>
</feature>
<feature type="strand" evidence="17">
    <location>
        <begin position="183"/>
        <end position="190"/>
    </location>
</feature>
<feature type="strand" evidence="17">
    <location>
        <begin position="195"/>
        <end position="199"/>
    </location>
</feature>
<feature type="turn" evidence="17">
    <location>
        <begin position="200"/>
        <end position="202"/>
    </location>
</feature>
<feature type="strand" evidence="17">
    <location>
        <begin position="204"/>
        <end position="209"/>
    </location>
</feature>
<feature type="strand" evidence="17">
    <location>
        <begin position="211"/>
        <end position="213"/>
    </location>
</feature>
<feature type="helix" evidence="17">
    <location>
        <begin position="218"/>
        <end position="220"/>
    </location>
</feature>
<feature type="strand" evidence="17">
    <location>
        <begin position="224"/>
        <end position="228"/>
    </location>
</feature>
<feature type="strand" evidence="17">
    <location>
        <begin position="246"/>
        <end position="272"/>
    </location>
</feature>
<feature type="strand" evidence="17">
    <location>
        <begin position="274"/>
        <end position="276"/>
    </location>
</feature>
<feature type="strand" evidence="17">
    <location>
        <begin position="278"/>
        <end position="282"/>
    </location>
</feature>
<feature type="strand" evidence="17">
    <location>
        <begin position="288"/>
        <end position="299"/>
    </location>
</feature>
<feature type="strand" evidence="16">
    <location>
        <begin position="309"/>
        <end position="311"/>
    </location>
</feature>
<feature type="strand" evidence="17">
    <location>
        <begin position="314"/>
        <end position="330"/>
    </location>
</feature>
<feature type="strand" evidence="17">
    <location>
        <begin position="338"/>
        <end position="343"/>
    </location>
</feature>
<feature type="strand" evidence="17">
    <location>
        <begin position="349"/>
        <end position="354"/>
    </location>
</feature>
<feature type="strand" evidence="17">
    <location>
        <begin position="358"/>
        <end position="365"/>
    </location>
</feature>
<feature type="strand" evidence="18">
    <location>
        <begin position="366"/>
        <end position="368"/>
    </location>
</feature>
<feature type="strand" evidence="17">
    <location>
        <begin position="370"/>
        <end position="374"/>
    </location>
</feature>
<proteinExistence type="evidence at protein level"/>
<accession>Q13112</accession>
<accession>Q99548</accession>
<sequence>MKVITCEIAWHNKEPVYSLDFQHGTAGRIHRLASAGVDTNVRIWKVEKGPDGKAIVEFLSNLARHTKAVNVVRFSPTGEILASGGDDAVILLWKVNDNKEPEQIAFQDEDEAQLNKENWTVVKTLRGHLEDVYDICWATDGNLMASASVDNTAIIWDVSKGQKISIFNEHKSYVQGVTWDPLGQYVATLSCDRVLRVYSIQKKRVAFNVSKMLSGIGAEGEARSYRMFHDDSMKSFFRRLSFTPDGSLLLTPAGCVESGENVMNTTYVFSRKNLKRPIAHLPCPGKATLAVRCCPVYFELRPVVETGVELMSLPYRLVFAVASEDSVLLYDTQQSFPFGYVSNIHYHTLSDISWSSDGAFLAISSTDGYCSFVTFEKDELGIPLKEKPVLNMRTPDTAKKTKSQTHRGSSPGPRPVEGTPASRTQDPSSPGTTPPQARQAPAPTVIRDPPSITPAVKSPLPGPSEEKTLQPSSQNTKAHPSRRVTLNTLQAWSKTTPRRINLTPLKTDTPPSSVPTSVISTPSTEEIQSETPGDAQGSPPELKRPRLDENKGGTESLDP</sequence>
<keyword id="KW-0002">3D-structure</keyword>
<keyword id="KW-0007">Acetylation</keyword>
<keyword id="KW-0131">Cell cycle</keyword>
<keyword id="KW-0143">Chaperone</keyword>
<keyword id="KW-0156">Chromatin regulator</keyword>
<keyword id="KW-0963">Cytoplasm</keyword>
<keyword id="KW-0903">Direct protein sequencing</keyword>
<keyword id="KW-0227">DNA damage</keyword>
<keyword id="KW-0234">DNA repair</keyword>
<keyword id="KW-0235">DNA replication</keyword>
<keyword id="KW-0539">Nucleus</keyword>
<keyword id="KW-0597">Phosphoprotein</keyword>
<keyword id="KW-1267">Proteomics identification</keyword>
<keyword id="KW-1185">Reference proteome</keyword>
<keyword id="KW-0677">Repeat</keyword>
<keyword id="KW-0853">WD repeat</keyword>
<evidence type="ECO:0000250" key="1">
    <source>
        <dbReference type="UniProtKB" id="Q5R1S9"/>
    </source>
</evidence>
<evidence type="ECO:0000255" key="2"/>
<evidence type="ECO:0000256" key="3">
    <source>
        <dbReference type="SAM" id="MobiDB-lite"/>
    </source>
</evidence>
<evidence type="ECO:0000269" key="4">
    <source>
    </source>
</evidence>
<evidence type="ECO:0000269" key="5">
    <source>
    </source>
</evidence>
<evidence type="ECO:0000269" key="6">
    <source>
    </source>
</evidence>
<evidence type="ECO:0000269" key="7">
    <source>
    </source>
</evidence>
<evidence type="ECO:0000305" key="8"/>
<evidence type="ECO:0000312" key="9">
    <source>
        <dbReference type="HGNC" id="HGNC:1911"/>
    </source>
</evidence>
<evidence type="ECO:0007744" key="10">
    <source>
    </source>
</evidence>
<evidence type="ECO:0007744" key="11">
    <source>
    </source>
</evidence>
<evidence type="ECO:0007744" key="12">
    <source>
    </source>
</evidence>
<evidence type="ECO:0007744" key="13">
    <source>
    </source>
</evidence>
<evidence type="ECO:0007744" key="14">
    <source>
    </source>
</evidence>
<evidence type="ECO:0007744" key="15">
    <source>
    </source>
</evidence>
<evidence type="ECO:0007829" key="16">
    <source>
        <dbReference type="PDB" id="7Y5K"/>
    </source>
</evidence>
<evidence type="ECO:0007829" key="17">
    <source>
        <dbReference type="PDB" id="7Y5L"/>
    </source>
</evidence>
<evidence type="ECO:0007829" key="18">
    <source>
        <dbReference type="PDB" id="8IQG"/>
    </source>
</evidence>
<comment type="function">
    <text evidence="7">Acts as a component of the histone chaperone complex chromatin assembly factor 1 (CAF-1), which assembles histone octamers onto DNA during replication and repair. CAF-1 performs the first step of the nucleosome assembly process, bringing newly synthesized histones H3 and H4 to replicating DNA; histones H2A/H2B can bind to this chromatin precursor subsequent to DNA replication to complete the histone octamer.</text>
</comment>
<comment type="subunit">
    <text evidence="1 4">Subunit of the CAF-1 complex that contains RBBP4, CHAF1B and CHAF1A. CHAF1A binds directly to CHAF1B. Only minor amounts of RBBP4 are complexed with CHAF1A and CHAF1B in G1 phase. In G2 and S phase also monomeric CHAF1B is detected. Interacts with histones H3.1, H3.2 and H3.1t (PubMed:33857403).</text>
</comment>
<comment type="interaction">
    <interactant intactId="EBI-1052944">
        <id>Q13112</id>
    </interactant>
    <interactant intactId="EBI-749553">
        <id>Q9Y294</id>
        <label>ASF1A</label>
    </interactant>
    <organismsDiffer>false</organismsDiffer>
    <experiments>3</experiments>
</comment>
<comment type="interaction">
    <interactant intactId="EBI-1052944">
        <id>Q13112</id>
    </interactant>
    <interactant intactId="EBI-1055650">
        <id>Q9NVP2</id>
        <label>ASF1B</label>
    </interactant>
    <organismsDiffer>false</organismsDiffer>
    <experiments>5</experiments>
</comment>
<comment type="subcellular location">
    <subcellularLocation>
        <location evidence="6">Nucleus</location>
    </subcellularLocation>
    <subcellularLocation>
        <location evidence="6">Cytoplasm</location>
    </subcellularLocation>
    <text>DNA replication foci. Cytoplasmic in M phase.</text>
</comment>
<comment type="developmental stage">
    <text>Active complex is found in G1, S and G2 phases.</text>
</comment>
<comment type="PTM">
    <text evidence="5 6">Differentially phosphorylated during cell cycle. During mitosis the p60 subunit of inactive CAF-1 is hyperphosphorylated and displaced into the cytosol. Progressivly dephosphorylated from G1 to S and G2 phase. Phosphorylated p60 is recruited to chromatin undergoing DNA repair after UV irradiation in G1, S or G2 phases.</text>
</comment>
<comment type="similarity">
    <text evidence="8">Belongs to the WD repeat HIR1 family.</text>
</comment>
<name>CAF1B_HUMAN</name>
<organism>
    <name type="scientific">Homo sapiens</name>
    <name type="common">Human</name>
    <dbReference type="NCBI Taxonomy" id="9606"/>
    <lineage>
        <taxon>Eukaryota</taxon>
        <taxon>Metazoa</taxon>
        <taxon>Chordata</taxon>
        <taxon>Craniata</taxon>
        <taxon>Vertebrata</taxon>
        <taxon>Euteleostomi</taxon>
        <taxon>Mammalia</taxon>
        <taxon>Eutheria</taxon>
        <taxon>Euarchontoglires</taxon>
        <taxon>Primates</taxon>
        <taxon>Haplorrhini</taxon>
        <taxon>Catarrhini</taxon>
        <taxon>Hominidae</taxon>
        <taxon>Homo</taxon>
    </lineage>
</organism>
<dbReference type="EMBL" id="U20980">
    <property type="protein sequence ID" value="AAA76737.1"/>
    <property type="molecule type" value="mRNA"/>
</dbReference>
<dbReference type="EMBL" id="AP000694">
    <property type="protein sequence ID" value="BAA89426.1"/>
    <property type="molecule type" value="Genomic_DNA"/>
</dbReference>
<dbReference type="EMBL" id="AP001725">
    <property type="protein sequence ID" value="BAA95549.1"/>
    <property type="molecule type" value="Genomic_DNA"/>
</dbReference>
<dbReference type="EMBL" id="BC021218">
    <property type="protein sequence ID" value="AAH21218.1"/>
    <property type="molecule type" value="mRNA"/>
</dbReference>
<dbReference type="EMBL" id="X98262">
    <property type="protein sequence ID" value="CAA66915.1"/>
    <property type="molecule type" value="mRNA"/>
</dbReference>
<dbReference type="CCDS" id="CCDS13644.1"/>
<dbReference type="PIR" id="B56731">
    <property type="entry name" value="B56731"/>
</dbReference>
<dbReference type="RefSeq" id="NP_005432.1">
    <property type="nucleotide sequence ID" value="NM_005441.3"/>
</dbReference>
<dbReference type="RefSeq" id="XP_016883966.1">
    <property type="nucleotide sequence ID" value="XM_017028477.1"/>
</dbReference>
<dbReference type="RefSeq" id="XP_016883967.1">
    <property type="nucleotide sequence ID" value="XM_017028478.1"/>
</dbReference>
<dbReference type="PDB" id="7Y5K">
    <property type="method" value="X-ray"/>
    <property type="resolution" value="3.48 A"/>
    <property type="chains" value="B=1-419"/>
</dbReference>
<dbReference type="PDB" id="7Y5L">
    <property type="method" value="X-ray"/>
    <property type="resolution" value="3.42 A"/>
    <property type="chains" value="B/E=1-419"/>
</dbReference>
<dbReference type="PDB" id="7Y5O">
    <property type="method" value="X-ray"/>
    <property type="resolution" value="3.57 A"/>
    <property type="chains" value="B/E=1-419"/>
</dbReference>
<dbReference type="PDB" id="7Y5U">
    <property type="method" value="EM"/>
    <property type="resolution" value="3.80 A"/>
    <property type="chains" value="B=1-419"/>
</dbReference>
<dbReference type="PDB" id="7Y5V">
    <property type="method" value="EM"/>
    <property type="resolution" value="6.10 A"/>
    <property type="chains" value="B/G=1-419"/>
</dbReference>
<dbReference type="PDB" id="7Y60">
    <property type="method" value="EM"/>
    <property type="resolution" value="3.80 A"/>
    <property type="chains" value="L=1-419"/>
</dbReference>
<dbReference type="PDB" id="7Y61">
    <property type="method" value="EM"/>
    <property type="resolution" value="5.60 A"/>
    <property type="chains" value="L/N=1-419"/>
</dbReference>
<dbReference type="PDB" id="8IQF">
    <property type="method" value="EM"/>
    <property type="resolution" value="4.60 A"/>
    <property type="chains" value="B/G=1-559"/>
</dbReference>
<dbReference type="PDB" id="8IQG">
    <property type="method" value="EM"/>
    <property type="resolution" value="3.50 A"/>
    <property type="chains" value="B=1-559"/>
</dbReference>
<dbReference type="PDB" id="8J6S">
    <property type="method" value="EM"/>
    <property type="resolution" value="3.80 A"/>
    <property type="chains" value="L=1-559"/>
</dbReference>
<dbReference type="PDB" id="8J6T">
    <property type="method" value="EM"/>
    <property type="resolution" value="6.60 A"/>
    <property type="chains" value="L/N=1-559"/>
</dbReference>
<dbReference type="PDBsum" id="7Y5K"/>
<dbReference type="PDBsum" id="7Y5L"/>
<dbReference type="PDBsum" id="7Y5O"/>
<dbReference type="PDBsum" id="7Y5U"/>
<dbReference type="PDBsum" id="7Y5V"/>
<dbReference type="PDBsum" id="7Y60"/>
<dbReference type="PDBsum" id="7Y61"/>
<dbReference type="PDBsum" id="8IQF"/>
<dbReference type="PDBsum" id="8IQG"/>
<dbReference type="PDBsum" id="8J6S"/>
<dbReference type="PDBsum" id="8J6T"/>
<dbReference type="EMDB" id="EMD-33625"/>
<dbReference type="EMDB" id="EMD-33626"/>
<dbReference type="EMDB" id="EMD-33630"/>
<dbReference type="EMDB" id="EMD-33631"/>
<dbReference type="EMDB" id="EMD-35660"/>
<dbReference type="EMDB" id="EMD-35661"/>
<dbReference type="EMDB" id="EMD-36013"/>
<dbReference type="EMDB" id="EMD-36014"/>
<dbReference type="SMR" id="Q13112"/>
<dbReference type="BioGRID" id="113846">
    <property type="interactions" value="173"/>
</dbReference>
<dbReference type="ComplexPortal" id="CPX-569">
    <property type="entry name" value="Chromatin assembly factor 1 complex"/>
</dbReference>
<dbReference type="CORUM" id="Q13112"/>
<dbReference type="DIP" id="DIP-29243N"/>
<dbReference type="FunCoup" id="Q13112">
    <property type="interactions" value="2143"/>
</dbReference>
<dbReference type="IntAct" id="Q13112">
    <property type="interactions" value="62"/>
</dbReference>
<dbReference type="MINT" id="Q13112"/>
<dbReference type="STRING" id="9606.ENSP00000315700"/>
<dbReference type="GlyGen" id="Q13112">
    <property type="glycosylation" value="2 sites, 1 O-linked glycan (1 site)"/>
</dbReference>
<dbReference type="iPTMnet" id="Q13112"/>
<dbReference type="MetOSite" id="Q13112"/>
<dbReference type="PhosphoSitePlus" id="Q13112"/>
<dbReference type="SwissPalm" id="Q13112"/>
<dbReference type="BioMuta" id="CHAF1B"/>
<dbReference type="DMDM" id="3121829"/>
<dbReference type="jPOST" id="Q13112"/>
<dbReference type="MassIVE" id="Q13112"/>
<dbReference type="PaxDb" id="9606-ENSP00000315700"/>
<dbReference type="PeptideAtlas" id="Q13112"/>
<dbReference type="ProteomicsDB" id="59163"/>
<dbReference type="Pumba" id="Q13112"/>
<dbReference type="Antibodypedia" id="8327">
    <property type="antibodies" value="324 antibodies from 35 providers"/>
</dbReference>
<dbReference type="DNASU" id="8208"/>
<dbReference type="Ensembl" id="ENST00000314103.6">
    <property type="protein sequence ID" value="ENSP00000315700.4"/>
    <property type="gene ID" value="ENSG00000159259.8"/>
</dbReference>
<dbReference type="GeneID" id="8208"/>
<dbReference type="KEGG" id="hsa:8208"/>
<dbReference type="MANE-Select" id="ENST00000314103.6">
    <property type="protein sequence ID" value="ENSP00000315700.4"/>
    <property type="RefSeq nucleotide sequence ID" value="NM_005441.3"/>
    <property type="RefSeq protein sequence ID" value="NP_005432.1"/>
</dbReference>
<dbReference type="UCSC" id="uc002yvj.4">
    <property type="organism name" value="human"/>
</dbReference>
<dbReference type="AGR" id="HGNC:1911"/>
<dbReference type="CTD" id="8208"/>
<dbReference type="DisGeNET" id="8208"/>
<dbReference type="GeneCards" id="CHAF1B"/>
<dbReference type="HGNC" id="HGNC:1911">
    <property type="gene designation" value="CHAF1B"/>
</dbReference>
<dbReference type="HPA" id="ENSG00000159259">
    <property type="expression patterns" value="Tissue enhanced (skeletal)"/>
</dbReference>
<dbReference type="MalaCards" id="CHAF1B"/>
<dbReference type="MIM" id="601245">
    <property type="type" value="gene"/>
</dbReference>
<dbReference type="neXtProt" id="NX_Q13112"/>
<dbReference type="OpenTargets" id="ENSG00000159259"/>
<dbReference type="PharmGKB" id="PA26447"/>
<dbReference type="VEuPathDB" id="HostDB:ENSG00000159259"/>
<dbReference type="eggNOG" id="KOG1009">
    <property type="taxonomic scope" value="Eukaryota"/>
</dbReference>
<dbReference type="GeneTree" id="ENSGT00550000074968"/>
<dbReference type="HOGENOM" id="CLU_010127_5_2_1"/>
<dbReference type="InParanoid" id="Q13112"/>
<dbReference type="OMA" id="CTTPEIS"/>
<dbReference type="OrthoDB" id="71227at2759"/>
<dbReference type="PAN-GO" id="Q13112">
    <property type="GO annotations" value="3 GO annotations based on evolutionary models"/>
</dbReference>
<dbReference type="PhylomeDB" id="Q13112"/>
<dbReference type="TreeFam" id="TF313062"/>
<dbReference type="PathwayCommons" id="Q13112"/>
<dbReference type="SignaLink" id="Q13112"/>
<dbReference type="SIGNOR" id="Q13112"/>
<dbReference type="BioGRID-ORCS" id="8208">
    <property type="hits" value="822 hits in 1153 CRISPR screens"/>
</dbReference>
<dbReference type="ChiTaRS" id="CHAF1B">
    <property type="organism name" value="human"/>
</dbReference>
<dbReference type="GeneWiki" id="CHAF1B"/>
<dbReference type="GenomeRNAi" id="8208"/>
<dbReference type="Pharos" id="Q13112">
    <property type="development level" value="Tbio"/>
</dbReference>
<dbReference type="PRO" id="PR:Q13112"/>
<dbReference type="Proteomes" id="UP000005640">
    <property type="component" value="Chromosome 21"/>
</dbReference>
<dbReference type="RNAct" id="Q13112">
    <property type="molecule type" value="protein"/>
</dbReference>
<dbReference type="Bgee" id="ENSG00000159259">
    <property type="expression patterns" value="Expressed in secondary oocyte and 112 other cell types or tissues"/>
</dbReference>
<dbReference type="GO" id="GO:0033186">
    <property type="term" value="C:CAF-1 complex"/>
    <property type="evidence" value="ECO:0000314"/>
    <property type="project" value="UniProtKB"/>
</dbReference>
<dbReference type="GO" id="GO:0000785">
    <property type="term" value="C:chromatin"/>
    <property type="evidence" value="ECO:0000314"/>
    <property type="project" value="UniProtKB"/>
</dbReference>
<dbReference type="GO" id="GO:0005737">
    <property type="term" value="C:cytoplasm"/>
    <property type="evidence" value="ECO:0000303"/>
    <property type="project" value="UniProtKB"/>
</dbReference>
<dbReference type="GO" id="GO:0005654">
    <property type="term" value="C:nucleoplasm"/>
    <property type="evidence" value="ECO:0000314"/>
    <property type="project" value="HPA"/>
</dbReference>
<dbReference type="GO" id="GO:0005634">
    <property type="term" value="C:nucleus"/>
    <property type="evidence" value="ECO:0000318"/>
    <property type="project" value="GO_Central"/>
</dbReference>
<dbReference type="GO" id="GO:0032991">
    <property type="term" value="C:protein-containing complex"/>
    <property type="evidence" value="ECO:0000314"/>
    <property type="project" value="UniProtKB"/>
</dbReference>
<dbReference type="GO" id="GO:0003682">
    <property type="term" value="F:chromatin binding"/>
    <property type="evidence" value="ECO:0000304"/>
    <property type="project" value="ProtInc"/>
</dbReference>
<dbReference type="GO" id="GO:0042393">
    <property type="term" value="F:histone binding"/>
    <property type="evidence" value="ECO:0000303"/>
    <property type="project" value="UniProtKB"/>
</dbReference>
<dbReference type="GO" id="GO:0051082">
    <property type="term" value="F:unfolded protein binding"/>
    <property type="evidence" value="ECO:0000304"/>
    <property type="project" value="ProtInc"/>
</dbReference>
<dbReference type="GO" id="GO:0006281">
    <property type="term" value="P:DNA repair"/>
    <property type="evidence" value="ECO:0007669"/>
    <property type="project" value="UniProtKB-KW"/>
</dbReference>
<dbReference type="GO" id="GO:0006260">
    <property type="term" value="P:DNA replication"/>
    <property type="evidence" value="ECO:0007669"/>
    <property type="project" value="UniProtKB-KW"/>
</dbReference>
<dbReference type="GO" id="GO:0006335">
    <property type="term" value="P:DNA replication-dependent chromatin assembly"/>
    <property type="evidence" value="ECO:0000314"/>
    <property type="project" value="GO_Central"/>
</dbReference>
<dbReference type="GO" id="GO:0006334">
    <property type="term" value="P:nucleosome assembly"/>
    <property type="evidence" value="ECO:0000314"/>
    <property type="project" value="GO_Central"/>
</dbReference>
<dbReference type="FunFam" id="2.130.10.10:FF:000248">
    <property type="entry name" value="Chromatin assembly factor 1 subunit B"/>
    <property type="match status" value="1"/>
</dbReference>
<dbReference type="FunFam" id="2.130.10.10:FF:001187">
    <property type="entry name" value="Chromatin assembly factor-1 p105 subunit"/>
    <property type="match status" value="1"/>
</dbReference>
<dbReference type="Gene3D" id="2.130.10.10">
    <property type="entry name" value="YVTN repeat-like/Quinoprotein amine dehydrogenase"/>
    <property type="match status" value="2"/>
</dbReference>
<dbReference type="InterPro" id="IPR029129">
    <property type="entry name" value="CAF1_p60_C"/>
</dbReference>
<dbReference type="InterPro" id="IPR055410">
    <property type="entry name" value="CAF1B_HIR1_beta-prop"/>
</dbReference>
<dbReference type="InterPro" id="IPR001632">
    <property type="entry name" value="Gprotein_B"/>
</dbReference>
<dbReference type="InterPro" id="IPR045145">
    <property type="entry name" value="PTHR15271"/>
</dbReference>
<dbReference type="InterPro" id="IPR015943">
    <property type="entry name" value="WD40/YVTN_repeat-like_dom_sf"/>
</dbReference>
<dbReference type="InterPro" id="IPR019775">
    <property type="entry name" value="WD40_repeat_CS"/>
</dbReference>
<dbReference type="InterPro" id="IPR036322">
    <property type="entry name" value="WD40_repeat_dom_sf"/>
</dbReference>
<dbReference type="InterPro" id="IPR001680">
    <property type="entry name" value="WD40_rpt"/>
</dbReference>
<dbReference type="PANTHER" id="PTHR15271">
    <property type="entry name" value="CHROMATIN ASSEMBLY FACTOR 1 SUBUNIT B"/>
    <property type="match status" value="1"/>
</dbReference>
<dbReference type="PANTHER" id="PTHR15271:SF4">
    <property type="entry name" value="CHROMATIN ASSEMBLY FACTOR 1 SUBUNIT B"/>
    <property type="match status" value="1"/>
</dbReference>
<dbReference type="Pfam" id="PF24105">
    <property type="entry name" value="Beta-prop_CAF1B_HIR1"/>
    <property type="match status" value="1"/>
</dbReference>
<dbReference type="Pfam" id="PF15512">
    <property type="entry name" value="CAF-1_p60_C"/>
    <property type="match status" value="1"/>
</dbReference>
<dbReference type="PRINTS" id="PR00319">
    <property type="entry name" value="GPROTEINB"/>
</dbReference>
<dbReference type="SMART" id="SM00320">
    <property type="entry name" value="WD40"/>
    <property type="match status" value="5"/>
</dbReference>
<dbReference type="SUPFAM" id="SSF50978">
    <property type="entry name" value="WD40 repeat-like"/>
    <property type="match status" value="1"/>
</dbReference>
<dbReference type="PROSITE" id="PS00678">
    <property type="entry name" value="WD_REPEATS_1"/>
    <property type="match status" value="1"/>
</dbReference>
<dbReference type="PROSITE" id="PS50082">
    <property type="entry name" value="WD_REPEATS_2"/>
    <property type="match status" value="3"/>
</dbReference>
<dbReference type="PROSITE" id="PS50294">
    <property type="entry name" value="WD_REPEATS_REGION"/>
    <property type="match status" value="1"/>
</dbReference>
<gene>
    <name evidence="9" type="primary">CHAF1B</name>
    <name type="synonym">CAF1A</name>
    <name type="synonym">CAF1P60</name>
    <name type="synonym">MPHOSPH7</name>
    <name type="synonym">MPP7</name>
</gene>
<reference key="1">
    <citation type="journal article" date="1995" name="Cell">
        <title>The p150 and p60 subunits of chromatin assembly factor I: a molecular link between newly synthesized histones and DNA replication.</title>
        <authorList>
            <person name="Kaufman P.D."/>
            <person name="Kobayashi R."/>
            <person name="Kessler N."/>
            <person name="Stillman B."/>
        </authorList>
    </citation>
    <scope>NUCLEOTIDE SEQUENCE [MRNA]</scope>
    <scope>PROTEIN SEQUENCE OF 100-123</scope>
</reference>
<reference key="2">
    <citation type="submission" date="1999-11" db="EMBL/GenBank/DDBJ databases">
        <title>Genomic sequencing of 1.2-Mb region on human chromosome 21q22.2.</title>
        <authorList>
            <person name="Shibuya K."/>
            <person name="Kudoh J."/>
            <person name="Minoshima S."/>
            <person name="Kawasaki K."/>
            <person name="Nakatoh E."/>
            <person name="Shintani A."/>
            <person name="Asakawa S."/>
            <person name="Shimizu N."/>
        </authorList>
    </citation>
    <scope>NUCLEOTIDE SEQUENCE [GENOMIC DNA]</scope>
</reference>
<reference key="3">
    <citation type="journal article" date="2000" name="Nature">
        <title>The DNA sequence of human chromosome 21.</title>
        <authorList>
            <person name="Hattori M."/>
            <person name="Fujiyama A."/>
            <person name="Taylor T.D."/>
            <person name="Watanabe H."/>
            <person name="Yada T."/>
            <person name="Park H.-S."/>
            <person name="Toyoda A."/>
            <person name="Ishii K."/>
            <person name="Totoki Y."/>
            <person name="Choi D.-K."/>
            <person name="Groner Y."/>
            <person name="Soeda E."/>
            <person name="Ohki M."/>
            <person name="Takagi T."/>
            <person name="Sakaki Y."/>
            <person name="Taudien S."/>
            <person name="Blechschmidt K."/>
            <person name="Polley A."/>
            <person name="Menzel U."/>
            <person name="Delabar J."/>
            <person name="Kumpf K."/>
            <person name="Lehmann R."/>
            <person name="Patterson D."/>
            <person name="Reichwald K."/>
            <person name="Rump A."/>
            <person name="Schillhabel M."/>
            <person name="Schudy A."/>
            <person name="Zimmermann W."/>
            <person name="Rosenthal A."/>
            <person name="Kudoh J."/>
            <person name="Shibuya K."/>
            <person name="Kawasaki K."/>
            <person name="Asakawa S."/>
            <person name="Shintani A."/>
            <person name="Sasaki T."/>
            <person name="Nagamine K."/>
            <person name="Mitsuyama S."/>
            <person name="Antonarakis S.E."/>
            <person name="Minoshima S."/>
            <person name="Shimizu N."/>
            <person name="Nordsiek G."/>
            <person name="Hornischer K."/>
            <person name="Brandt P."/>
            <person name="Scharfe M."/>
            <person name="Schoen O."/>
            <person name="Desario A."/>
            <person name="Reichelt J."/>
            <person name="Kauer G."/>
            <person name="Bloecker H."/>
            <person name="Ramser J."/>
            <person name="Beck A."/>
            <person name="Klages S."/>
            <person name="Hennig S."/>
            <person name="Riesselmann L."/>
            <person name="Dagand E."/>
            <person name="Wehrmeyer S."/>
            <person name="Borzym K."/>
            <person name="Gardiner K."/>
            <person name="Nizetic D."/>
            <person name="Francis F."/>
            <person name="Lehrach H."/>
            <person name="Reinhardt R."/>
            <person name="Yaspo M.-L."/>
        </authorList>
    </citation>
    <scope>NUCLEOTIDE SEQUENCE [LARGE SCALE GENOMIC DNA]</scope>
</reference>
<reference key="4">
    <citation type="journal article" date="2004" name="Genome Res.">
        <title>The status, quality, and expansion of the NIH full-length cDNA project: the Mammalian Gene Collection (MGC).</title>
        <authorList>
            <consortium name="The MGC Project Team"/>
        </authorList>
    </citation>
    <scope>NUCLEOTIDE SEQUENCE [LARGE SCALE MRNA]</scope>
    <source>
        <tissue>Uterus</tissue>
    </source>
</reference>
<reference key="5">
    <citation type="journal article" date="1996" name="Mol. Biol. Cell">
        <title>Identification of novel M phase phosphoproteins by expression cloning.</title>
        <authorList>
            <person name="Matsumoto-Taniura N."/>
            <person name="Pirollet F."/>
            <person name="Monroe R."/>
            <person name="Gerace L."/>
            <person name="Westendorf J.M."/>
        </authorList>
    </citation>
    <scope>NUCLEOTIDE SEQUENCE [MRNA] OF 474-559</scope>
    <scope>PHOSPHORYLATION</scope>
    <source>
        <tissue>Lymphoblast</tissue>
    </source>
</reference>
<reference key="6">
    <citation type="journal article" date="1998" name="J. Cell Biol.">
        <title>Recruitment of phosphorylated chromatin assembly factor 1 to chromatin after UV irradiation of human cells.</title>
        <authorList>
            <person name="Martini E."/>
            <person name="Roche D.M."/>
            <person name="Marheineke K."/>
            <person name="Verreault A."/>
            <person name="Almouzni G."/>
        </authorList>
    </citation>
    <scope>FUNCTION</scope>
</reference>
<reference key="7">
    <citation type="journal article" date="1998" name="J. Biol. Chem.">
        <title>Nucleosome assembly activity and intracellular localization of human CAF-1 changes during the cell division cycle.</title>
        <authorList>
            <person name="Marheineke K."/>
            <person name="Krude T."/>
        </authorList>
    </citation>
    <scope>SUBCELLULAR LOCATION</scope>
    <scope>PHOSPHORYLATION</scope>
</reference>
<reference key="8">
    <citation type="journal article" date="2000" name="J. Cell Sci.">
        <title>CAF-1 and the inheritance of chromatin states: at the crossroads of DNA replication and repair.</title>
        <authorList>
            <person name="Ridgway P."/>
            <person name="Almouzni G."/>
        </authorList>
    </citation>
    <scope>REVIEW</scope>
</reference>
<reference key="9">
    <citation type="journal article" date="2006" name="Cell">
        <title>Global, in vivo, and site-specific phosphorylation dynamics in signaling networks.</title>
        <authorList>
            <person name="Olsen J.V."/>
            <person name="Blagoev B."/>
            <person name="Gnad F."/>
            <person name="Macek B."/>
            <person name="Kumar C."/>
            <person name="Mortensen P."/>
            <person name="Mann M."/>
        </authorList>
    </citation>
    <scope>IDENTIFICATION BY MASS SPECTROMETRY [LARGE SCALE ANALYSIS]</scope>
    <source>
        <tissue>Cervix carcinoma</tissue>
    </source>
</reference>
<reference key="10">
    <citation type="journal article" date="2006" name="Nat. Biotechnol.">
        <title>A probability-based approach for high-throughput protein phosphorylation analysis and site localization.</title>
        <authorList>
            <person name="Beausoleil S.A."/>
            <person name="Villen J."/>
            <person name="Gerber S.A."/>
            <person name="Rush J."/>
            <person name="Gygi S.P."/>
        </authorList>
    </citation>
    <scope>IDENTIFICATION BY MASS SPECTROMETRY [LARGE SCALE ANALYSIS]</scope>
    <source>
        <tissue>Cervix carcinoma</tissue>
    </source>
</reference>
<reference key="11">
    <citation type="journal article" date="2008" name="J. Proteome Res.">
        <title>Combining protein-based IMAC, peptide-based IMAC, and MudPIT for efficient phosphoproteomic analysis.</title>
        <authorList>
            <person name="Cantin G.T."/>
            <person name="Yi W."/>
            <person name="Lu B."/>
            <person name="Park S.K."/>
            <person name="Xu T."/>
            <person name="Lee J.-D."/>
            <person name="Yates J.R. III"/>
        </authorList>
    </citation>
    <scope>IDENTIFICATION BY MASS SPECTROMETRY [LARGE SCALE ANALYSIS]</scope>
    <source>
        <tissue>Cervix carcinoma</tissue>
    </source>
</reference>
<reference key="12">
    <citation type="journal article" date="2008" name="Proc. Natl. Acad. Sci. U.S.A.">
        <title>A quantitative atlas of mitotic phosphorylation.</title>
        <authorList>
            <person name="Dephoure N."/>
            <person name="Zhou C."/>
            <person name="Villen J."/>
            <person name="Beausoleil S.A."/>
            <person name="Bakalarski C.E."/>
            <person name="Elledge S.J."/>
            <person name="Gygi S.P."/>
        </authorList>
    </citation>
    <scope>PHOSPHORYLATION [LARGE SCALE ANALYSIS] AT THR-419; SER-429; THR-433 AND SER-538</scope>
    <scope>IDENTIFICATION BY MASS SPECTROMETRY [LARGE SCALE ANALYSIS]</scope>
    <source>
        <tissue>Cervix carcinoma</tissue>
    </source>
</reference>
<reference key="13">
    <citation type="journal article" date="2009" name="Anal. Chem.">
        <title>Lys-N and trypsin cover complementary parts of the phosphoproteome in a refined SCX-based approach.</title>
        <authorList>
            <person name="Gauci S."/>
            <person name="Helbig A.O."/>
            <person name="Slijper M."/>
            <person name="Krijgsveld J."/>
            <person name="Heck A.J."/>
            <person name="Mohammed S."/>
        </authorList>
    </citation>
    <scope>IDENTIFICATION BY MASS SPECTROMETRY [LARGE SCALE ANALYSIS]</scope>
</reference>
<reference key="14">
    <citation type="journal article" date="2009" name="Sci. Signal.">
        <title>Quantitative phosphoproteomic analysis of T cell receptor signaling reveals system-wide modulation of protein-protein interactions.</title>
        <authorList>
            <person name="Mayya V."/>
            <person name="Lundgren D.H."/>
            <person name="Hwang S.-I."/>
            <person name="Rezaul K."/>
            <person name="Wu L."/>
            <person name="Eng J.K."/>
            <person name="Rodionov V."/>
            <person name="Han D.K."/>
        </authorList>
    </citation>
    <scope>PHOSPHORYLATION [LARGE SCALE ANALYSIS] AT SER-429</scope>
    <scope>IDENTIFICATION BY MASS SPECTROMETRY [LARGE SCALE ANALYSIS]</scope>
    <source>
        <tissue>Leukemic T-cell</tissue>
    </source>
</reference>
<reference key="15">
    <citation type="journal article" date="2009" name="Science">
        <title>Lysine acetylation targets protein complexes and co-regulates major cellular functions.</title>
        <authorList>
            <person name="Choudhary C."/>
            <person name="Kumar C."/>
            <person name="Gnad F."/>
            <person name="Nielsen M.L."/>
            <person name="Rehman M."/>
            <person name="Walther T.C."/>
            <person name="Olsen J.V."/>
            <person name="Mann M."/>
        </authorList>
    </citation>
    <scope>ACETYLATION [LARGE SCALE ANALYSIS] AT LYS-494</scope>
    <scope>IDENTIFICATION BY MASS SPECTROMETRY [LARGE SCALE ANALYSIS]</scope>
</reference>
<reference key="16">
    <citation type="journal article" date="2010" name="Sci. Signal.">
        <title>Quantitative phosphoproteomics reveals widespread full phosphorylation site occupancy during mitosis.</title>
        <authorList>
            <person name="Olsen J.V."/>
            <person name="Vermeulen M."/>
            <person name="Santamaria A."/>
            <person name="Kumar C."/>
            <person name="Miller M.L."/>
            <person name="Jensen L.J."/>
            <person name="Gnad F."/>
            <person name="Cox J."/>
            <person name="Jensen T.S."/>
            <person name="Nigg E.A."/>
            <person name="Brunak S."/>
            <person name="Mann M."/>
        </authorList>
    </citation>
    <scope>PHOSPHORYLATION [LARGE SCALE ANALYSIS] AT SER-409 AND SER-458</scope>
    <scope>IDENTIFICATION BY MASS SPECTROMETRY [LARGE SCALE ANALYSIS]</scope>
    <source>
        <tissue>Cervix carcinoma</tissue>
    </source>
</reference>
<reference key="17">
    <citation type="journal article" date="2011" name="BMC Syst. Biol.">
        <title>Initial characterization of the human central proteome.</title>
        <authorList>
            <person name="Burkard T.R."/>
            <person name="Planyavsky M."/>
            <person name="Kaupe I."/>
            <person name="Breitwieser F.P."/>
            <person name="Buerckstuemmer T."/>
            <person name="Bennett K.L."/>
            <person name="Superti-Furga G."/>
            <person name="Colinge J."/>
        </authorList>
    </citation>
    <scope>IDENTIFICATION BY MASS SPECTROMETRY [LARGE SCALE ANALYSIS]</scope>
</reference>
<reference key="18">
    <citation type="journal article" date="2011" name="Sci. Signal.">
        <title>System-wide temporal characterization of the proteome and phosphoproteome of human embryonic stem cell differentiation.</title>
        <authorList>
            <person name="Rigbolt K.T."/>
            <person name="Prokhorova T.A."/>
            <person name="Akimov V."/>
            <person name="Henningsen J."/>
            <person name="Johansen P.T."/>
            <person name="Kratchmarova I."/>
            <person name="Kassem M."/>
            <person name="Mann M."/>
            <person name="Olsen J.V."/>
            <person name="Blagoev B."/>
        </authorList>
    </citation>
    <scope>PHOSPHORYLATION [LARGE SCALE ANALYSIS] AT SER-458</scope>
    <scope>IDENTIFICATION BY MASS SPECTROMETRY [LARGE SCALE ANALYSIS]</scope>
</reference>
<reference key="19">
    <citation type="journal article" date="2013" name="J. Proteome Res.">
        <title>Toward a comprehensive characterization of a human cancer cell phosphoproteome.</title>
        <authorList>
            <person name="Zhou H."/>
            <person name="Di Palma S."/>
            <person name="Preisinger C."/>
            <person name="Peng M."/>
            <person name="Polat A.N."/>
            <person name="Heck A.J."/>
            <person name="Mohammed S."/>
        </authorList>
    </citation>
    <scope>PHOSPHORYLATION [LARGE SCALE ANALYSIS] AT THR-394; THR-419; SER-429; THR-433 AND SER-458</scope>
    <scope>IDENTIFICATION BY MASS SPECTROMETRY [LARGE SCALE ANALYSIS]</scope>
    <source>
        <tissue>Cervix carcinoma</tissue>
        <tissue>Erythroleukemia</tissue>
    </source>
</reference>
<reference key="20">
    <citation type="journal article" date="2021" name="Mol. Cell">
        <title>DNAJC9 integrates heat shock molecular chaperones into the histone chaperone network.</title>
        <authorList>
            <person name="Hammond C.M."/>
            <person name="Bao H."/>
            <person name="Hendriks I.A."/>
            <person name="Carraro M."/>
            <person name="Garcia-Nieto A."/>
            <person name="Liu Y."/>
            <person name="Reveron-Gomez N."/>
            <person name="Spanos C."/>
            <person name="Chen L."/>
            <person name="Rappsilber J."/>
            <person name="Nielsen M.L."/>
            <person name="Patel D.J."/>
            <person name="Huang H."/>
            <person name="Groth A."/>
        </authorList>
    </citation>
    <scope>INTERACTION WITH HISTONES H3.1; H3.2 AND H3.1T</scope>
</reference>